<comment type="function">
    <text evidence="1">Involved in the gluconeogenesis. Catalyzes stereospecifically the conversion of dihydroxyacetone phosphate (DHAP) to D-glyceraldehyde-3-phosphate (G3P).</text>
</comment>
<comment type="catalytic activity">
    <reaction evidence="1">
        <text>D-glyceraldehyde 3-phosphate = dihydroxyacetone phosphate</text>
        <dbReference type="Rhea" id="RHEA:18585"/>
        <dbReference type="ChEBI" id="CHEBI:57642"/>
        <dbReference type="ChEBI" id="CHEBI:59776"/>
        <dbReference type="EC" id="5.3.1.1"/>
    </reaction>
</comment>
<comment type="pathway">
    <text evidence="1">Carbohydrate biosynthesis; gluconeogenesis.</text>
</comment>
<comment type="pathway">
    <text evidence="1">Carbohydrate degradation; glycolysis; D-glyceraldehyde 3-phosphate from glycerone phosphate: step 1/1.</text>
</comment>
<comment type="subunit">
    <text evidence="1">Homodimer.</text>
</comment>
<comment type="subcellular location">
    <subcellularLocation>
        <location evidence="1">Cytoplasm</location>
    </subcellularLocation>
</comment>
<comment type="similarity">
    <text evidence="1">Belongs to the triosephosphate isomerase family.</text>
</comment>
<sequence>MRKKLIAGNWKMNGSLAANEALVKGLRVGVGASVCQVALCVPSVYLAQCQALLVGTAIALGAQDLSQHEVGAFTGEISGAMLQEFGVRYCIVGHSERRQYHFETDALVAAKAQRALACGITPIVCVGETLAEREAGRTEEVVKRQLAAVIHANGHCISEVVVAYEPVWAIGTGKTASIEQAQQVHSVLRQQLQAASIQADRIQIIYGGSMNAANAAELLAQPDIDGGLVGGASLKVPDFLSIIASAC</sequence>
<protein>
    <recommendedName>
        <fullName evidence="1">Triosephosphate isomerase</fullName>
        <shortName evidence="1">TIM</shortName>
        <shortName evidence="1">TPI</shortName>
        <ecNumber evidence="1">5.3.1.1</ecNumber>
    </recommendedName>
    <alternativeName>
        <fullName evidence="1">Triose-phosphate isomerase</fullName>
    </alternativeName>
</protein>
<evidence type="ECO:0000255" key="1">
    <source>
        <dbReference type="HAMAP-Rule" id="MF_00147"/>
    </source>
</evidence>
<keyword id="KW-0963">Cytoplasm</keyword>
<keyword id="KW-0312">Gluconeogenesis</keyword>
<keyword id="KW-0324">Glycolysis</keyword>
<keyword id="KW-0413">Isomerase</keyword>
<keyword id="KW-1185">Reference proteome</keyword>
<feature type="chain" id="PRO_0000307545" description="Triosephosphate isomerase">
    <location>
        <begin position="1"/>
        <end position="247"/>
    </location>
</feature>
<feature type="active site" description="Electrophile" evidence="1">
    <location>
        <position position="94"/>
    </location>
</feature>
<feature type="active site" description="Proton acceptor" evidence="1">
    <location>
        <position position="165"/>
    </location>
</feature>
<feature type="binding site" evidence="1">
    <location>
        <begin position="9"/>
        <end position="11"/>
    </location>
    <ligand>
        <name>substrate</name>
    </ligand>
</feature>
<feature type="binding site" evidence="1">
    <location>
        <position position="171"/>
    </location>
    <ligand>
        <name>substrate</name>
    </ligand>
</feature>
<feature type="binding site" evidence="1">
    <location>
        <position position="209"/>
    </location>
    <ligand>
        <name>substrate</name>
    </ligand>
</feature>
<feature type="binding site" evidence="1">
    <location>
        <begin position="230"/>
        <end position="231"/>
    </location>
    <ligand>
        <name>substrate</name>
    </ligand>
</feature>
<dbReference type="EC" id="5.3.1.1" evidence="1"/>
<dbReference type="EMBL" id="CP000267">
    <property type="protein sequence ID" value="ABD69224.1"/>
    <property type="molecule type" value="Genomic_DNA"/>
</dbReference>
<dbReference type="RefSeq" id="WP_011463792.1">
    <property type="nucleotide sequence ID" value="NC_007908.1"/>
</dbReference>
<dbReference type="SMR" id="Q21YC9"/>
<dbReference type="STRING" id="338969.Rfer_1491"/>
<dbReference type="KEGG" id="rfr:Rfer_1491"/>
<dbReference type="eggNOG" id="COG0149">
    <property type="taxonomic scope" value="Bacteria"/>
</dbReference>
<dbReference type="HOGENOM" id="CLU_024251_2_1_4"/>
<dbReference type="OrthoDB" id="9809429at2"/>
<dbReference type="UniPathway" id="UPA00109">
    <property type="reaction ID" value="UER00189"/>
</dbReference>
<dbReference type="UniPathway" id="UPA00138"/>
<dbReference type="Proteomes" id="UP000008332">
    <property type="component" value="Chromosome"/>
</dbReference>
<dbReference type="GO" id="GO:0005829">
    <property type="term" value="C:cytosol"/>
    <property type="evidence" value="ECO:0007669"/>
    <property type="project" value="TreeGrafter"/>
</dbReference>
<dbReference type="GO" id="GO:0004807">
    <property type="term" value="F:triose-phosphate isomerase activity"/>
    <property type="evidence" value="ECO:0007669"/>
    <property type="project" value="UniProtKB-UniRule"/>
</dbReference>
<dbReference type="GO" id="GO:0006094">
    <property type="term" value="P:gluconeogenesis"/>
    <property type="evidence" value="ECO:0007669"/>
    <property type="project" value="UniProtKB-UniRule"/>
</dbReference>
<dbReference type="GO" id="GO:0046166">
    <property type="term" value="P:glyceraldehyde-3-phosphate biosynthetic process"/>
    <property type="evidence" value="ECO:0007669"/>
    <property type="project" value="TreeGrafter"/>
</dbReference>
<dbReference type="GO" id="GO:0019563">
    <property type="term" value="P:glycerol catabolic process"/>
    <property type="evidence" value="ECO:0007669"/>
    <property type="project" value="TreeGrafter"/>
</dbReference>
<dbReference type="GO" id="GO:0006096">
    <property type="term" value="P:glycolytic process"/>
    <property type="evidence" value="ECO:0007669"/>
    <property type="project" value="UniProtKB-UniRule"/>
</dbReference>
<dbReference type="CDD" id="cd00311">
    <property type="entry name" value="TIM"/>
    <property type="match status" value="1"/>
</dbReference>
<dbReference type="FunFam" id="3.20.20.70:FF:000016">
    <property type="entry name" value="Triosephosphate isomerase"/>
    <property type="match status" value="1"/>
</dbReference>
<dbReference type="Gene3D" id="3.20.20.70">
    <property type="entry name" value="Aldolase class I"/>
    <property type="match status" value="1"/>
</dbReference>
<dbReference type="HAMAP" id="MF_00147_B">
    <property type="entry name" value="TIM_B"/>
    <property type="match status" value="1"/>
</dbReference>
<dbReference type="InterPro" id="IPR013785">
    <property type="entry name" value="Aldolase_TIM"/>
</dbReference>
<dbReference type="InterPro" id="IPR035990">
    <property type="entry name" value="TIM_sf"/>
</dbReference>
<dbReference type="InterPro" id="IPR022896">
    <property type="entry name" value="TrioseP_Isoase_bac/euk"/>
</dbReference>
<dbReference type="InterPro" id="IPR000652">
    <property type="entry name" value="Triosephosphate_isomerase"/>
</dbReference>
<dbReference type="InterPro" id="IPR020861">
    <property type="entry name" value="Triosephosphate_isomerase_AS"/>
</dbReference>
<dbReference type="NCBIfam" id="TIGR00419">
    <property type="entry name" value="tim"/>
    <property type="match status" value="1"/>
</dbReference>
<dbReference type="PANTHER" id="PTHR21139">
    <property type="entry name" value="TRIOSEPHOSPHATE ISOMERASE"/>
    <property type="match status" value="1"/>
</dbReference>
<dbReference type="PANTHER" id="PTHR21139:SF42">
    <property type="entry name" value="TRIOSEPHOSPHATE ISOMERASE"/>
    <property type="match status" value="1"/>
</dbReference>
<dbReference type="Pfam" id="PF00121">
    <property type="entry name" value="TIM"/>
    <property type="match status" value="1"/>
</dbReference>
<dbReference type="SUPFAM" id="SSF51351">
    <property type="entry name" value="Triosephosphate isomerase (TIM)"/>
    <property type="match status" value="1"/>
</dbReference>
<dbReference type="PROSITE" id="PS00171">
    <property type="entry name" value="TIM_1"/>
    <property type="match status" value="1"/>
</dbReference>
<dbReference type="PROSITE" id="PS51440">
    <property type="entry name" value="TIM_2"/>
    <property type="match status" value="1"/>
</dbReference>
<proteinExistence type="inferred from homology"/>
<organism>
    <name type="scientific">Albidiferax ferrireducens (strain ATCC BAA-621 / DSM 15236 / T118)</name>
    <name type="common">Rhodoferax ferrireducens</name>
    <dbReference type="NCBI Taxonomy" id="338969"/>
    <lineage>
        <taxon>Bacteria</taxon>
        <taxon>Pseudomonadati</taxon>
        <taxon>Pseudomonadota</taxon>
        <taxon>Betaproteobacteria</taxon>
        <taxon>Burkholderiales</taxon>
        <taxon>Comamonadaceae</taxon>
        <taxon>Rhodoferax</taxon>
    </lineage>
</organism>
<reference key="1">
    <citation type="submission" date="2006-02" db="EMBL/GenBank/DDBJ databases">
        <title>Complete sequence of chromosome of Rhodoferax ferrireducens DSM 15236.</title>
        <authorList>
            <person name="Copeland A."/>
            <person name="Lucas S."/>
            <person name="Lapidus A."/>
            <person name="Barry K."/>
            <person name="Detter J.C."/>
            <person name="Glavina del Rio T."/>
            <person name="Hammon N."/>
            <person name="Israni S."/>
            <person name="Pitluck S."/>
            <person name="Brettin T."/>
            <person name="Bruce D."/>
            <person name="Han C."/>
            <person name="Tapia R."/>
            <person name="Gilna P."/>
            <person name="Kiss H."/>
            <person name="Schmutz J."/>
            <person name="Larimer F."/>
            <person name="Land M."/>
            <person name="Kyrpides N."/>
            <person name="Ivanova N."/>
            <person name="Richardson P."/>
        </authorList>
    </citation>
    <scope>NUCLEOTIDE SEQUENCE [LARGE SCALE GENOMIC DNA]</scope>
    <source>
        <strain>ATCC BAA-621 / DSM 15236 / T118</strain>
    </source>
</reference>
<gene>
    <name evidence="1" type="primary">tpiA</name>
    <name type="ordered locus">Rfer_1491</name>
</gene>
<accession>Q21YC9</accession>
<name>TPIS_ALBFT</name>